<reference key="1">
    <citation type="journal article" date="2007" name="PLoS ONE">
        <title>Analysis of the neurotoxin complex genes in Clostridium botulinum A1-A4 and B1 strains: BoNT/A3, /Ba4 and /B1 clusters are located within plasmids.</title>
        <authorList>
            <person name="Smith T.J."/>
            <person name="Hill K.K."/>
            <person name="Foley B.T."/>
            <person name="Detter J.C."/>
            <person name="Munk A.C."/>
            <person name="Bruce D.C."/>
            <person name="Doggett N.A."/>
            <person name="Smith L.A."/>
            <person name="Marks J.D."/>
            <person name="Xie G."/>
            <person name="Brettin T.S."/>
        </authorList>
    </citation>
    <scope>NUCLEOTIDE SEQUENCE [LARGE SCALE GENOMIC DNA]</scope>
    <source>
        <strain>ATCC 19397 / Type A</strain>
    </source>
</reference>
<dbReference type="EC" id="2.8.1.13" evidence="1"/>
<dbReference type="EMBL" id="CP000726">
    <property type="protein sequence ID" value="ABS35807.1"/>
    <property type="molecule type" value="Genomic_DNA"/>
</dbReference>
<dbReference type="SMR" id="A7FXG3"/>
<dbReference type="KEGG" id="cba:CLB_2868"/>
<dbReference type="HOGENOM" id="CLU_035188_0_0_9"/>
<dbReference type="GO" id="GO:0005737">
    <property type="term" value="C:cytoplasm"/>
    <property type="evidence" value="ECO:0007669"/>
    <property type="project" value="UniProtKB-SubCell"/>
</dbReference>
<dbReference type="GO" id="GO:0005524">
    <property type="term" value="F:ATP binding"/>
    <property type="evidence" value="ECO:0007669"/>
    <property type="project" value="UniProtKB-KW"/>
</dbReference>
<dbReference type="GO" id="GO:0000049">
    <property type="term" value="F:tRNA binding"/>
    <property type="evidence" value="ECO:0007669"/>
    <property type="project" value="UniProtKB-KW"/>
</dbReference>
<dbReference type="GO" id="GO:0103016">
    <property type="term" value="F:tRNA-uridine 2-sulfurtransferase activity"/>
    <property type="evidence" value="ECO:0007669"/>
    <property type="project" value="UniProtKB-EC"/>
</dbReference>
<dbReference type="GO" id="GO:0002143">
    <property type="term" value="P:tRNA wobble position uridine thiolation"/>
    <property type="evidence" value="ECO:0007669"/>
    <property type="project" value="TreeGrafter"/>
</dbReference>
<dbReference type="CDD" id="cd01998">
    <property type="entry name" value="MnmA_TRMU-like"/>
    <property type="match status" value="1"/>
</dbReference>
<dbReference type="FunFam" id="2.30.30.280:FF:000001">
    <property type="entry name" value="tRNA-specific 2-thiouridylase MnmA"/>
    <property type="match status" value="1"/>
</dbReference>
<dbReference type="FunFam" id="2.40.30.10:FF:000023">
    <property type="entry name" value="tRNA-specific 2-thiouridylase MnmA"/>
    <property type="match status" value="1"/>
</dbReference>
<dbReference type="FunFam" id="3.40.50.620:FF:000115">
    <property type="entry name" value="tRNA-specific 2-thiouridylase MnmA"/>
    <property type="match status" value="1"/>
</dbReference>
<dbReference type="Gene3D" id="2.30.30.280">
    <property type="entry name" value="Adenine nucleotide alpha hydrolases-like domains"/>
    <property type="match status" value="1"/>
</dbReference>
<dbReference type="Gene3D" id="3.40.50.620">
    <property type="entry name" value="HUPs"/>
    <property type="match status" value="1"/>
</dbReference>
<dbReference type="Gene3D" id="2.40.30.10">
    <property type="entry name" value="Translation factors"/>
    <property type="match status" value="1"/>
</dbReference>
<dbReference type="HAMAP" id="MF_00144">
    <property type="entry name" value="tRNA_thiouridyl_MnmA"/>
    <property type="match status" value="1"/>
</dbReference>
<dbReference type="InterPro" id="IPR004506">
    <property type="entry name" value="MnmA-like"/>
</dbReference>
<dbReference type="InterPro" id="IPR046885">
    <property type="entry name" value="MnmA-like_C"/>
</dbReference>
<dbReference type="InterPro" id="IPR046884">
    <property type="entry name" value="MnmA-like_central"/>
</dbReference>
<dbReference type="InterPro" id="IPR023382">
    <property type="entry name" value="MnmA-like_central_sf"/>
</dbReference>
<dbReference type="InterPro" id="IPR014729">
    <property type="entry name" value="Rossmann-like_a/b/a_fold"/>
</dbReference>
<dbReference type="NCBIfam" id="NF001138">
    <property type="entry name" value="PRK00143.1"/>
    <property type="match status" value="1"/>
</dbReference>
<dbReference type="NCBIfam" id="TIGR00420">
    <property type="entry name" value="trmU"/>
    <property type="match status" value="1"/>
</dbReference>
<dbReference type="PANTHER" id="PTHR11933:SF5">
    <property type="entry name" value="MITOCHONDRIAL TRNA-SPECIFIC 2-THIOURIDYLASE 1"/>
    <property type="match status" value="1"/>
</dbReference>
<dbReference type="PANTHER" id="PTHR11933">
    <property type="entry name" value="TRNA 5-METHYLAMINOMETHYL-2-THIOURIDYLATE -METHYLTRANSFERASE"/>
    <property type="match status" value="1"/>
</dbReference>
<dbReference type="Pfam" id="PF03054">
    <property type="entry name" value="tRNA_Me_trans"/>
    <property type="match status" value="1"/>
</dbReference>
<dbReference type="Pfam" id="PF20258">
    <property type="entry name" value="tRNA_Me_trans_C"/>
    <property type="match status" value="1"/>
</dbReference>
<dbReference type="Pfam" id="PF20259">
    <property type="entry name" value="tRNA_Me_trans_M"/>
    <property type="match status" value="1"/>
</dbReference>
<dbReference type="SUPFAM" id="SSF52402">
    <property type="entry name" value="Adenine nucleotide alpha hydrolases-like"/>
    <property type="match status" value="1"/>
</dbReference>
<accession>A7FXG3</accession>
<proteinExistence type="inferred from homology"/>
<comment type="function">
    <text evidence="1">Catalyzes the 2-thiolation of uridine at the wobble position (U34) of tRNA, leading to the formation of s(2)U34.</text>
</comment>
<comment type="catalytic activity">
    <reaction evidence="1">
        <text>S-sulfanyl-L-cysteinyl-[protein] + uridine(34) in tRNA + AH2 + ATP = 2-thiouridine(34) in tRNA + L-cysteinyl-[protein] + A + AMP + diphosphate + H(+)</text>
        <dbReference type="Rhea" id="RHEA:47032"/>
        <dbReference type="Rhea" id="RHEA-COMP:10131"/>
        <dbReference type="Rhea" id="RHEA-COMP:11726"/>
        <dbReference type="Rhea" id="RHEA-COMP:11727"/>
        <dbReference type="Rhea" id="RHEA-COMP:11728"/>
        <dbReference type="ChEBI" id="CHEBI:13193"/>
        <dbReference type="ChEBI" id="CHEBI:15378"/>
        <dbReference type="ChEBI" id="CHEBI:17499"/>
        <dbReference type="ChEBI" id="CHEBI:29950"/>
        <dbReference type="ChEBI" id="CHEBI:30616"/>
        <dbReference type="ChEBI" id="CHEBI:33019"/>
        <dbReference type="ChEBI" id="CHEBI:61963"/>
        <dbReference type="ChEBI" id="CHEBI:65315"/>
        <dbReference type="ChEBI" id="CHEBI:87170"/>
        <dbReference type="ChEBI" id="CHEBI:456215"/>
        <dbReference type="EC" id="2.8.1.13"/>
    </reaction>
</comment>
<comment type="subcellular location">
    <subcellularLocation>
        <location evidence="1">Cytoplasm</location>
    </subcellularLocation>
</comment>
<comment type="similarity">
    <text evidence="1">Belongs to the MnmA/TRMU family.</text>
</comment>
<gene>
    <name evidence="1" type="primary">mnmA2</name>
    <name type="ordered locus">CLB_2868</name>
</gene>
<keyword id="KW-0067">ATP-binding</keyword>
<keyword id="KW-0963">Cytoplasm</keyword>
<keyword id="KW-1015">Disulfide bond</keyword>
<keyword id="KW-0547">Nucleotide-binding</keyword>
<keyword id="KW-0694">RNA-binding</keyword>
<keyword id="KW-0808">Transferase</keyword>
<keyword id="KW-0819">tRNA processing</keyword>
<keyword id="KW-0820">tRNA-binding</keyword>
<evidence type="ECO:0000255" key="1">
    <source>
        <dbReference type="HAMAP-Rule" id="MF_00144"/>
    </source>
</evidence>
<feature type="chain" id="PRO_0000349586" description="tRNA-specific 2-thiouridylase MnmA 2">
    <location>
        <begin position="1"/>
        <end position="353"/>
    </location>
</feature>
<feature type="region of interest" description="Interaction with tRNA" evidence="1">
    <location>
        <begin position="144"/>
        <end position="146"/>
    </location>
</feature>
<feature type="region of interest" description="Interaction with tRNA" evidence="1">
    <location>
        <begin position="300"/>
        <end position="301"/>
    </location>
</feature>
<feature type="active site" description="Nucleophile" evidence="1">
    <location>
        <position position="98"/>
    </location>
</feature>
<feature type="active site" description="Cysteine persulfide intermediate" evidence="1">
    <location>
        <position position="194"/>
    </location>
</feature>
<feature type="binding site" evidence="1">
    <location>
        <begin position="9"/>
        <end position="16"/>
    </location>
    <ligand>
        <name>ATP</name>
        <dbReference type="ChEBI" id="CHEBI:30616"/>
    </ligand>
</feature>
<feature type="binding site" evidence="1">
    <location>
        <position position="35"/>
    </location>
    <ligand>
        <name>ATP</name>
        <dbReference type="ChEBI" id="CHEBI:30616"/>
    </ligand>
</feature>
<feature type="binding site" evidence="1">
    <location>
        <position position="122"/>
    </location>
    <ligand>
        <name>ATP</name>
        <dbReference type="ChEBI" id="CHEBI:30616"/>
    </ligand>
</feature>
<feature type="site" description="Interaction with tRNA" evidence="1">
    <location>
        <position position="123"/>
    </location>
</feature>
<feature type="site" description="Interaction with tRNA" evidence="1">
    <location>
        <position position="333"/>
    </location>
</feature>
<feature type="disulfide bond" description="Alternate" evidence="1">
    <location>
        <begin position="98"/>
        <end position="194"/>
    </location>
</feature>
<organism>
    <name type="scientific">Clostridium botulinum (strain ATCC 19397 / Type A)</name>
    <dbReference type="NCBI Taxonomy" id="441770"/>
    <lineage>
        <taxon>Bacteria</taxon>
        <taxon>Bacillati</taxon>
        <taxon>Bacillota</taxon>
        <taxon>Clostridia</taxon>
        <taxon>Eubacteriales</taxon>
        <taxon>Clostridiaceae</taxon>
        <taxon>Clostridium</taxon>
    </lineage>
</organism>
<name>MNMA2_CLOB1</name>
<sequence length="353" mass="40157">MSKGIVALAMSGGVDSSVSAYILKERGYDVIGIYMDLWRDERKGYCNKSAAEDARRVAEKLDIPFHVINIEKKFKDNVIDYFIDEYLSGRTPNPCVACNKTIKFEAFFNAAKEFGADFMATGHYCKIEERNGRKVIVKAEDDKKDQTYMMYNLKQYQLERTIMPCGEYKKDHIREIAENIGLDVYNKKDSQEICFIPDNDHGGFIKRNYKSKIKQGNFVDKAGKIIGKHKGIIYYTIGQRKGLGIALGKPAYVIDINPITNEVVIGDEEDIFRTELIAKDVNFIPFDKLEKSMELEAKVRYSAKPSKATIIPLENNKVKVVFQNKQRAITKGQSVVFYDKDMLVGGGIIEEIV</sequence>
<protein>
    <recommendedName>
        <fullName evidence="1">tRNA-specific 2-thiouridylase MnmA 2</fullName>
        <ecNumber evidence="1">2.8.1.13</ecNumber>
    </recommendedName>
</protein>